<dbReference type="EMBL" id="DQ917559">
    <property type="protein sequence ID" value="ABK63588.1"/>
    <property type="molecule type" value="mRNA"/>
</dbReference>
<dbReference type="EMBL" id="EU401823">
    <property type="protein sequence ID" value="ACC77772.1"/>
    <property type="molecule type" value="Genomic_DNA"/>
</dbReference>
<dbReference type="SMR" id="B5G6H1"/>
<dbReference type="GO" id="GO:0005576">
    <property type="term" value="C:extracellular region"/>
    <property type="evidence" value="ECO:0000250"/>
    <property type="project" value="UniProtKB"/>
</dbReference>
<dbReference type="GO" id="GO:0005615">
    <property type="term" value="C:extracellular space"/>
    <property type="evidence" value="ECO:0007669"/>
    <property type="project" value="TreeGrafter"/>
</dbReference>
<dbReference type="GO" id="GO:0004867">
    <property type="term" value="F:serine-type endopeptidase inhibitor activity"/>
    <property type="evidence" value="ECO:0007669"/>
    <property type="project" value="TreeGrafter"/>
</dbReference>
<dbReference type="GO" id="GO:0019731">
    <property type="term" value="P:antibacterial humoral response"/>
    <property type="evidence" value="ECO:0007669"/>
    <property type="project" value="TreeGrafter"/>
</dbReference>
<dbReference type="GO" id="GO:0045087">
    <property type="term" value="P:innate immune response"/>
    <property type="evidence" value="ECO:0007669"/>
    <property type="project" value="TreeGrafter"/>
</dbReference>
<dbReference type="GO" id="GO:0044278">
    <property type="term" value="P:venom-mediated disruption of cell wall in another organism"/>
    <property type="evidence" value="ECO:0000250"/>
    <property type="project" value="UniProtKB"/>
</dbReference>
<dbReference type="Gene3D" id="4.10.75.10">
    <property type="entry name" value="Elafin-like"/>
    <property type="match status" value="1"/>
</dbReference>
<dbReference type="InterPro" id="IPR036645">
    <property type="entry name" value="Elafin-like_sf"/>
</dbReference>
<dbReference type="InterPro" id="IPR008197">
    <property type="entry name" value="WAP_dom"/>
</dbReference>
<dbReference type="InterPro" id="IPR050514">
    <property type="entry name" value="WAP_four-disulfide_core"/>
</dbReference>
<dbReference type="PANTHER" id="PTHR19441:SF44">
    <property type="entry name" value="ANTILEUKOPROTEINASE"/>
    <property type="match status" value="1"/>
</dbReference>
<dbReference type="PANTHER" id="PTHR19441">
    <property type="entry name" value="WHEY ACDIC PROTEIN WAP"/>
    <property type="match status" value="1"/>
</dbReference>
<dbReference type="Pfam" id="PF00095">
    <property type="entry name" value="WAP"/>
    <property type="match status" value="1"/>
</dbReference>
<dbReference type="PRINTS" id="PR00003">
    <property type="entry name" value="4DISULPHCORE"/>
</dbReference>
<dbReference type="SMART" id="SM00217">
    <property type="entry name" value="WAP"/>
    <property type="match status" value="1"/>
</dbReference>
<dbReference type="SUPFAM" id="SSF57256">
    <property type="entry name" value="Elafin-like"/>
    <property type="match status" value="1"/>
</dbReference>
<dbReference type="PROSITE" id="PS51390">
    <property type="entry name" value="WAP"/>
    <property type="match status" value="1"/>
</dbReference>
<keyword id="KW-0044">Antibiotic</keyword>
<keyword id="KW-0929">Antimicrobial</keyword>
<keyword id="KW-1015">Disulfide bond</keyword>
<keyword id="KW-0964">Secreted</keyword>
<keyword id="KW-0732">Signal</keyword>
<proteinExistence type="inferred from homology"/>
<feature type="signal peptide" evidence="2">
    <location>
        <begin position="1"/>
        <end position="24"/>
    </location>
</feature>
<feature type="chain" id="PRO_5000395571" description="Nigwaprin-a">
    <location>
        <begin position="25"/>
        <end position="75"/>
    </location>
</feature>
<feature type="domain" description="WAP" evidence="3">
    <location>
        <begin position="27"/>
        <end position="72"/>
    </location>
</feature>
<feature type="disulfide bond" evidence="3">
    <location>
        <begin position="34"/>
        <end position="60"/>
    </location>
</feature>
<feature type="disulfide bond" evidence="3">
    <location>
        <begin position="43"/>
        <end position="64"/>
    </location>
</feature>
<feature type="disulfide bond" evidence="3">
    <location>
        <begin position="47"/>
        <end position="59"/>
    </location>
</feature>
<feature type="disulfide bond" evidence="3">
    <location>
        <begin position="53"/>
        <end position="68"/>
    </location>
</feature>
<organism>
    <name type="scientific">Cryptophis nigrescens</name>
    <name type="common">Eastern small-eyed snake</name>
    <name type="synonym">Rhinoplocephalus nigrescens</name>
    <dbReference type="NCBI Taxonomy" id="292442"/>
    <lineage>
        <taxon>Eukaryota</taxon>
        <taxon>Metazoa</taxon>
        <taxon>Chordata</taxon>
        <taxon>Craniata</taxon>
        <taxon>Vertebrata</taxon>
        <taxon>Euteleostomi</taxon>
        <taxon>Lepidosauria</taxon>
        <taxon>Squamata</taxon>
        <taxon>Bifurcata</taxon>
        <taxon>Unidentata</taxon>
        <taxon>Episquamata</taxon>
        <taxon>Toxicofera</taxon>
        <taxon>Serpentes</taxon>
        <taxon>Colubroidea</taxon>
        <taxon>Elapidae</taxon>
        <taxon>Hydrophiinae</taxon>
        <taxon>Cryptophis</taxon>
    </lineage>
</organism>
<sequence>MSSGGLLLLLGLLTLWAELTPVSGQDRPVKPGLCPPRPQKPPCVKECKNDWSCRGEQKCCRYGCIYECRDPIFVK</sequence>
<protein>
    <recommendedName>
        <fullName evidence="4">Nigwaprin-a</fullName>
    </recommendedName>
</protein>
<accession>B5G6H1</accession>
<comment type="function">
    <text evidence="1">Damages membranes of susceptible bacteria. Has no hemolytic activity. Not toxic to mice. Does not inhibit the proteinases elastase and cathepsin G.</text>
</comment>
<comment type="subcellular location">
    <subcellularLocation>
        <location evidence="6">Secreted</location>
    </subcellularLocation>
</comment>
<comment type="tissue specificity">
    <text evidence="6">Expressed by the venom gland.</text>
</comment>
<comment type="similarity">
    <text evidence="5">Belongs to the venom waprin family.</text>
</comment>
<name>WAPA_CRYNI</name>
<reference key="1">
    <citation type="journal article" date="2008" name="Cell. Mol. Life Sci.">
        <title>Common evolution of waprin and Kunitz-like toxin families in Australian venomous snakes.</title>
        <authorList>
            <person name="St Pierre L."/>
            <person name="Earl S.T."/>
            <person name="Filippovich I."/>
            <person name="Sorokina N."/>
            <person name="Masci P.P."/>
            <person name="De Jersey J."/>
            <person name="Lavin M.F."/>
        </authorList>
    </citation>
    <scope>NUCLEOTIDE SEQUENCE [GENOMIC DNA / MRNA]</scope>
    <source>
        <tissue>Venom gland</tissue>
    </source>
</reference>
<evidence type="ECO:0000250" key="1">
    <source>
        <dbReference type="UniProtKB" id="P83952"/>
    </source>
</evidence>
<evidence type="ECO:0000255" key="2"/>
<evidence type="ECO:0000255" key="3">
    <source>
        <dbReference type="PROSITE-ProRule" id="PRU00722"/>
    </source>
</evidence>
<evidence type="ECO:0000303" key="4">
    <source>
    </source>
</evidence>
<evidence type="ECO:0000305" key="5"/>
<evidence type="ECO:0000305" key="6">
    <source>
    </source>
</evidence>